<proteinExistence type="evidence at protein level"/>
<evidence type="ECO:0000250" key="1">
    <source>
        <dbReference type="UniProtKB" id="P69848"/>
    </source>
</evidence>
<evidence type="ECO:0000255" key="2">
    <source>
        <dbReference type="PROSITE-ProRule" id="PRU01266"/>
    </source>
</evidence>
<evidence type="ECO:0000269" key="3">
    <source>
    </source>
</evidence>
<evidence type="ECO:0000303" key="4">
    <source>
    </source>
</evidence>
<evidence type="ECO:0000303" key="5">
    <source>
    </source>
</evidence>
<evidence type="ECO:0000305" key="6"/>
<evidence type="ECO:0000305" key="7">
    <source>
    </source>
</evidence>
<evidence type="ECO:0000312" key="8">
    <source>
        <dbReference type="EMBL" id="ADG13224.1"/>
    </source>
</evidence>
<accession>D5VRM1</accession>
<gene>
    <name evidence="5" type="primary">nifB</name>
    <name evidence="8" type="ordered locus">Metin_0554</name>
</gene>
<name>NIFB_METIM</name>
<comment type="function">
    <text evidence="3 4">Involved in the biosynthesis of the iron-molybdenum cofactor (FeMo-co or M-cluster) found in the dinitrogenase enzyme of the nitrogenase complex in nitrogen-fixing microorganisms (PubMed:27268267). NifB catalyzes the crucial step of radical SAM-dependent carbide insertion that occurs concomitant with the insertion of a 9th sulfur and the rearrangement/coupling of two [4Fe-4S] clusters into a [8Fe-9S-C] cluster, the precursor to the M-cluster (PubMed:26969410, PubMed:27268267).</text>
</comment>
<comment type="cofactor">
    <cofactor evidence="3">
        <name>[4Fe-4S] cluster</name>
        <dbReference type="ChEBI" id="CHEBI:49883"/>
    </cofactor>
    <text evidence="3">Binds 3 [4Fe-4S] clusters per monomer. One cluster is coordinated with 3 cysteines and an exchangeable S-adenosyl-L-methionine. The two others probably act as substrate.</text>
</comment>
<comment type="pathway">
    <text evidence="3">Cofactor biosynthesis; Fe-Mo cofactor biosynthesis.</text>
</comment>
<comment type="subunit">
    <text evidence="3">Monomer.</text>
</comment>
<comment type="similarity">
    <text evidence="6">Belongs to the radical SAM superfamily. NifB family.</text>
</comment>
<organism>
    <name type="scientific">Methanocaldococcus infernus (strain DSM 11812 / JCM 15783 / ME)</name>
    <dbReference type="NCBI Taxonomy" id="573063"/>
    <lineage>
        <taxon>Archaea</taxon>
        <taxon>Methanobacteriati</taxon>
        <taxon>Methanobacteriota</taxon>
        <taxon>Methanomada group</taxon>
        <taxon>Methanococci</taxon>
        <taxon>Methanococcales</taxon>
        <taxon>Methanocaldococcaceae</taxon>
        <taxon>Methanocaldococcus</taxon>
    </lineage>
</organism>
<feature type="chain" id="PRO_0000438991" description="FeMo cofactor biosynthesis protein NifB">
    <location>
        <begin position="1"/>
        <end position="302"/>
    </location>
</feature>
<feature type="domain" description="Radical SAM core" evidence="2">
    <location>
        <begin position="22"/>
        <end position="264"/>
    </location>
</feature>
<feature type="binding site" evidence="1 7">
    <location>
        <position position="36"/>
    </location>
    <ligand>
        <name>[4Fe-4S] cluster</name>
        <dbReference type="ChEBI" id="CHEBI:49883"/>
        <label>1</label>
        <note>4Fe-4S-S-AdoMet</note>
    </ligand>
</feature>
<feature type="binding site" evidence="1 7">
    <location>
        <position position="40"/>
    </location>
    <ligand>
        <name>[4Fe-4S] cluster</name>
        <dbReference type="ChEBI" id="CHEBI:49883"/>
        <label>1</label>
        <note>4Fe-4S-S-AdoMet</note>
    </ligand>
</feature>
<feature type="binding site" evidence="1 7">
    <location>
        <position position="43"/>
    </location>
    <ligand>
        <name>[4Fe-4S] cluster</name>
        <dbReference type="ChEBI" id="CHEBI:49883"/>
        <label>1</label>
        <note>4Fe-4S-S-AdoMet</note>
    </ligand>
</feature>
<feature type="binding site" evidence="1">
    <location>
        <position position="91"/>
    </location>
    <ligand>
        <name>S-adenosyl-L-methionine</name>
        <dbReference type="ChEBI" id="CHEBI:59789"/>
    </ligand>
</feature>
<feature type="binding site" evidence="1">
    <location>
        <position position="142"/>
    </location>
    <ligand>
        <name>S-adenosyl-L-methionine</name>
        <dbReference type="ChEBI" id="CHEBI:59789"/>
    </ligand>
</feature>
<feature type="binding site" evidence="1">
    <location>
        <position position="194"/>
    </location>
    <ligand>
        <name>S-adenosyl-L-methionine</name>
        <dbReference type="ChEBI" id="CHEBI:59789"/>
    </ligand>
</feature>
<feature type="binding site" evidence="7">
    <location>
        <position position="260"/>
    </location>
    <ligand>
        <name>[4Fe-4S] cluster</name>
        <dbReference type="ChEBI" id="CHEBI:49883"/>
        <label>2</label>
    </ligand>
</feature>
<feature type="binding site" evidence="7">
    <location>
        <position position="263"/>
    </location>
    <ligand>
        <name>[4Fe-4S] cluster</name>
        <dbReference type="ChEBI" id="CHEBI:49883"/>
        <label>2</label>
    </ligand>
</feature>
<feature type="mutagenesis site" description="Loss of activity; when associated with A-40 and A-43." evidence="3">
    <original>C</original>
    <variation>A</variation>
    <location>
        <position position="36"/>
    </location>
</feature>
<feature type="mutagenesis site" description="Loss of activity; when associated with A-36 and A-43." evidence="3">
    <original>C</original>
    <variation>A</variation>
    <location>
        <position position="40"/>
    </location>
</feature>
<feature type="mutagenesis site" description="Loss of activity; when associated with A-36 and A-40." evidence="3">
    <original>C</original>
    <variation>A</variation>
    <location>
        <position position="43"/>
    </location>
</feature>
<feature type="mutagenesis site" description="Loss of activity; when associated with A-263." evidence="3">
    <original>C</original>
    <variation>A</variation>
    <location>
        <position position="260"/>
    </location>
</feature>
<feature type="mutagenesis site" description="Loss of activity; when associated with A-260." evidence="3">
    <original>C</original>
    <variation>A</variation>
    <location>
        <position position="263"/>
    </location>
</feature>
<protein>
    <recommendedName>
        <fullName evidence="5">FeMo cofactor biosynthesis protein NifB</fullName>
        <ecNumber evidence="6">4.-.-.-</ecNumber>
    </recommendedName>
    <alternativeName>
        <fullName evidence="5">Nitrogenase cofactor maturase NifB</fullName>
    </alternativeName>
    <alternativeName>
        <fullName evidence="4">Radical SAM assemblase NifB</fullName>
    </alternativeName>
</protein>
<sequence length="302" mass="35022">MEKMSKFSHLLKAHPCFNEKVHDKYGRVHLPVAPRCNIACKFCKRSVSKECCEHRPGVSLGVLKPEDVEDYLKKILKEMPNIKVVGIAGPGDSLFNKETFETLKIIDEKFPNLIKCISTNGLLLSKYYKDLANLNVRTITVTVNAIKPEILEKIVDWVYYDKKLYRGLEGAKLLIEKQIEGIKKASEEDFIIKINTVLIPEINMDHVVEIAKFFKDYAYVQNIIPLIPQYKMKELRAPTCEEIKKVRKECEKYIPQFRACGQCRADAVGLIKEKELLKEFFKEKNKEKNIKLEVFDLKHFSH</sequence>
<dbReference type="EC" id="4.-.-.-" evidence="6"/>
<dbReference type="EMBL" id="CP002009">
    <property type="protein sequence ID" value="ADG13224.1"/>
    <property type="molecule type" value="Genomic_DNA"/>
</dbReference>
<dbReference type="RefSeq" id="WP_013099970.1">
    <property type="nucleotide sequence ID" value="NC_014122.1"/>
</dbReference>
<dbReference type="SMR" id="D5VRM1"/>
<dbReference type="STRING" id="573063.Metin_0554"/>
<dbReference type="GeneID" id="9131560"/>
<dbReference type="KEGG" id="mif:Metin_0554"/>
<dbReference type="eggNOG" id="arCOG00956">
    <property type="taxonomic scope" value="Archaea"/>
</dbReference>
<dbReference type="HOGENOM" id="CLU_027639_1_0_2"/>
<dbReference type="OrthoDB" id="53113at2157"/>
<dbReference type="UniPathway" id="UPA00782"/>
<dbReference type="Proteomes" id="UP000002061">
    <property type="component" value="Chromosome"/>
</dbReference>
<dbReference type="GO" id="GO:0051539">
    <property type="term" value="F:4 iron, 4 sulfur cluster binding"/>
    <property type="evidence" value="ECO:0007669"/>
    <property type="project" value="UniProtKB-KW"/>
</dbReference>
<dbReference type="GO" id="GO:0016829">
    <property type="term" value="F:lyase activity"/>
    <property type="evidence" value="ECO:0007669"/>
    <property type="project" value="UniProtKB-KW"/>
</dbReference>
<dbReference type="GO" id="GO:0046872">
    <property type="term" value="F:metal ion binding"/>
    <property type="evidence" value="ECO:0007669"/>
    <property type="project" value="UniProtKB-KW"/>
</dbReference>
<dbReference type="GO" id="GO:0009399">
    <property type="term" value="P:nitrogen fixation"/>
    <property type="evidence" value="ECO:0007669"/>
    <property type="project" value="UniProtKB-KW"/>
</dbReference>
<dbReference type="CDD" id="cd01335">
    <property type="entry name" value="Radical_SAM"/>
    <property type="match status" value="1"/>
</dbReference>
<dbReference type="Gene3D" id="3.20.20.70">
    <property type="entry name" value="Aldolase class I"/>
    <property type="match status" value="1"/>
</dbReference>
<dbReference type="InterPro" id="IPR013785">
    <property type="entry name" value="Aldolase_TIM"/>
</dbReference>
<dbReference type="InterPro" id="IPR006638">
    <property type="entry name" value="Elp3/MiaA/NifB-like_rSAM"/>
</dbReference>
<dbReference type="InterPro" id="IPR007197">
    <property type="entry name" value="rSAM"/>
</dbReference>
<dbReference type="PANTHER" id="PTHR43787:SF13">
    <property type="entry name" value="FEMO COFACTOR BIOSYNTHESIS PROTEIN NIFB"/>
    <property type="match status" value="1"/>
</dbReference>
<dbReference type="PANTHER" id="PTHR43787">
    <property type="entry name" value="FEMO COFACTOR BIOSYNTHESIS PROTEIN NIFB-RELATED"/>
    <property type="match status" value="1"/>
</dbReference>
<dbReference type="Pfam" id="PF04055">
    <property type="entry name" value="Radical_SAM"/>
    <property type="match status" value="1"/>
</dbReference>
<dbReference type="SFLD" id="SFLDS00029">
    <property type="entry name" value="Radical_SAM"/>
    <property type="match status" value="1"/>
</dbReference>
<dbReference type="SFLD" id="SFLDG01067">
    <property type="entry name" value="SPASM/twitch_domain_containing"/>
    <property type="match status" value="1"/>
</dbReference>
<dbReference type="SMART" id="SM00729">
    <property type="entry name" value="Elp3"/>
    <property type="match status" value="1"/>
</dbReference>
<dbReference type="SUPFAM" id="SSF102114">
    <property type="entry name" value="Radical SAM enzymes"/>
    <property type="match status" value="1"/>
</dbReference>
<dbReference type="PROSITE" id="PS51918">
    <property type="entry name" value="RADICAL_SAM"/>
    <property type="match status" value="1"/>
</dbReference>
<reference key="1">
    <citation type="submission" date="2010-04" db="EMBL/GenBank/DDBJ databases">
        <title>Complete sequence of Methanocaldococcus infernus ME.</title>
        <authorList>
            <consortium name="US DOE Joint Genome Institute"/>
            <person name="Lucas S."/>
            <person name="Copeland A."/>
            <person name="Lapidus A."/>
            <person name="Cheng J.-F."/>
            <person name="Bruce D."/>
            <person name="Goodwin L."/>
            <person name="Pitluck S."/>
            <person name="Munk A.C."/>
            <person name="Detter J.C."/>
            <person name="Han C."/>
            <person name="Tapia R."/>
            <person name="Land M."/>
            <person name="Hauser L."/>
            <person name="Kyrpides N."/>
            <person name="Mikhailova N."/>
            <person name="Sieprawska-Lupa M."/>
            <person name="Whitman W.B."/>
            <person name="Woyke T."/>
        </authorList>
    </citation>
    <scope>NUCLEOTIDE SEQUENCE [LARGE SCALE GENOMIC DNA]</scope>
    <source>
        <strain>DSM 11812 / JCM 15783 / ME</strain>
    </source>
</reference>
<reference key="2">
    <citation type="journal article" date="2016" name="Curr. Opin. Chem. Biol.">
        <title>Maturation of nitrogenase cofactor-the role of a class E radical SAM methyltransferase NifB.</title>
        <authorList>
            <person name="Hu Y."/>
            <person name="Ribbe M.W."/>
        </authorList>
    </citation>
    <scope>REVIEW</scope>
</reference>
<reference key="3">
    <citation type="journal article" date="2016" name="J. Am. Chem. Soc.">
        <title>Electron paramagnetic resonance characterization of three iron-sulfur clusters present in the nitrogenase cofactor maturase NifB from Methanocaldococcus infernus.</title>
        <authorList>
            <person name="Wilcoxen J."/>
            <person name="Arragain S."/>
            <person name="Scandurra A.A."/>
            <person name="Jimenez-Vicente E."/>
            <person name="Echavarri-Erasun C."/>
            <person name="Pollmann S."/>
            <person name="Britt R.D."/>
            <person name="Rubio L.M."/>
        </authorList>
    </citation>
    <scope>FUNCTION</scope>
    <scope>SAM CLEAVAGE</scope>
    <scope>COFACTOR</scope>
    <scope>PATHWAY</scope>
    <scope>SUBUNIT</scope>
    <scope>MUTAGENESIS OF CYS-36; CYS-40; CYS-43; CYS-260 AND CYS-263</scope>
</reference>
<keyword id="KW-0004">4Fe-4S</keyword>
<keyword id="KW-0408">Iron</keyword>
<keyword id="KW-0411">Iron-sulfur</keyword>
<keyword id="KW-0456">Lyase</keyword>
<keyword id="KW-0479">Metal-binding</keyword>
<keyword id="KW-0535">Nitrogen fixation</keyword>
<keyword id="KW-0949">S-adenosyl-L-methionine</keyword>